<keyword id="KW-0007">Acetylation</keyword>
<keyword id="KW-1003">Cell membrane</keyword>
<keyword id="KW-0175">Coiled coil</keyword>
<keyword id="KW-0963">Cytoplasm</keyword>
<keyword id="KW-0206">Cytoskeleton</keyword>
<keyword id="KW-0903">Direct protein sequencing</keyword>
<keyword id="KW-0325">Glycoprotein</keyword>
<keyword id="KW-0403">Intermediate filament</keyword>
<keyword id="KW-1017">Isopeptide bond</keyword>
<keyword id="KW-0472">Membrane</keyword>
<keyword id="KW-0539">Nucleus</keyword>
<keyword id="KW-0597">Phosphoprotein</keyword>
<keyword id="KW-1185">Reference proteome</keyword>
<keyword id="KW-0702">S-nitrosylation</keyword>
<keyword id="KW-0832">Ubl conjugation</keyword>
<reference key="1">
    <citation type="journal article" date="1992" name="Biochem. Biophys. Res. Commun.">
        <title>Differential expression of vimentin in rat prostatic tumors.</title>
        <authorList>
            <person name="Bussemakers M.J.G."/>
            <person name="Verhaegh G.W.C.T."/>
            <person name="van Bokhoven A."/>
            <person name="Debruyne F.M.J."/>
            <person name="Schalken J.A."/>
        </authorList>
    </citation>
    <scope>NUCLEOTIDE SEQUENCE [MRNA]</scope>
    <source>
        <strain>Fischer</strain>
    </source>
</reference>
<reference key="2">
    <citation type="journal article" date="2004" name="Genome Res.">
        <title>The status, quality, and expansion of the NIH full-length cDNA project: the Mammalian Gene Collection (MGC).</title>
        <authorList>
            <consortium name="The MGC Project Team"/>
        </authorList>
    </citation>
    <scope>NUCLEOTIDE SEQUENCE [LARGE SCALE MRNA]</scope>
    <source>
        <tissue>Prostate</tissue>
    </source>
</reference>
<reference key="3">
    <citation type="journal article" date="2005" name="FEBS J.">
        <title>Proteome analysis of a rat liver nuclear insoluble protein fraction and localization of a novel protein, ISP36, to compartments in the interchromatin space.</title>
        <authorList>
            <person name="Segawa M."/>
            <person name="Niino K."/>
            <person name="Mineki R."/>
            <person name="Kaga N."/>
            <person name="Murayama K."/>
            <person name="Sugimoto K."/>
            <person name="Watanabe Y."/>
            <person name="Furukawa K."/>
            <person name="Horigome T."/>
        </authorList>
    </citation>
    <scope>PROTEIN SEQUENCE OF 37-50</scope>
    <scope>SUBCELLULAR LOCATION</scope>
    <source>
        <tissue>Liver</tissue>
    </source>
</reference>
<reference key="4">
    <citation type="submission" date="2007-09" db="UniProtKB">
        <authorList>
            <person name="Lubec G."/>
            <person name="Afjehi-Sadat L."/>
            <person name="Kang S.U."/>
            <person name="Lubec S."/>
        </authorList>
    </citation>
    <scope>PROTEIN SEQUENCE OF 51-64; 123-129; 223-235; 295-304; 321-341; 346-364; 391-401 AND 411-424</scope>
    <scope>IDENTIFICATION BY MASS SPECTROMETRY</scope>
    <source>
        <strain>Sprague-Dawley</strain>
        <tissue>Brain</tissue>
        <tissue>Spinal cord</tissue>
    </source>
</reference>
<reference key="5">
    <citation type="submission" date="1992-02" db="EMBL/GenBank/DDBJ databases">
        <authorList>
            <person name="Paine M.L."/>
        </authorList>
    </citation>
    <scope>NUCLEOTIDE SEQUENCE [MRNA] OF 86-160</scope>
    <source>
        <tissue>Mammary gland</tissue>
    </source>
</reference>
<reference key="6">
    <citation type="journal article" date="1990" name="Biol. Cell">
        <title>The role of the vimentin intermediate filaments in rat 3Y1 cells elucidated by immunoelectron microscopy and computer-graphic reconstruction.</title>
        <authorList>
            <person name="Katsumoto T."/>
            <person name="Mitsushima A."/>
            <person name="Kurimura T."/>
        </authorList>
    </citation>
    <scope>FUNCTION</scope>
</reference>
<reference key="7">
    <citation type="journal article" date="2003" name="Endocrinology">
        <title>Rab8B GTPase and junction dynamics in the testis.</title>
        <authorList>
            <person name="Lau A.S."/>
            <person name="Mruk D.D."/>
        </authorList>
    </citation>
    <scope>INTERACTION WITH RAB8B</scope>
</reference>
<reference key="8">
    <citation type="journal article" date="2003" name="Mol. Biol. Cell">
        <title>Nestin promotes the phosphorylation-dependent disassembly of vimentin intermediate filaments during mitosis.</title>
        <authorList>
            <person name="Chou Y.-H."/>
            <person name="Khuon S."/>
            <person name="Herrmann H."/>
            <person name="Goldman R.D."/>
        </authorList>
    </citation>
    <scope>PHOSPHORYLATION AT SER-55</scope>
    <scope>MUTAGENESIS OF SER-55 AND 458-THR-SER-459</scope>
</reference>
<reference key="9">
    <citation type="journal article" date="2012" name="Nat. Commun.">
        <title>Quantitative maps of protein phosphorylation sites across 14 different rat organs and tissues.</title>
        <authorList>
            <person name="Lundby A."/>
            <person name="Secher A."/>
            <person name="Lage K."/>
            <person name="Nordsborg N.B."/>
            <person name="Dmytriyev A."/>
            <person name="Lundby C."/>
            <person name="Olsen J.V."/>
        </authorList>
    </citation>
    <scope>PHOSPHORYLATION [LARGE SCALE ANALYSIS] AT SER-51; SER-56; SER-83; SER-144; SER-214; SER-412; SER-419; SER-420; SER-430 AND SER-459</scope>
    <scope>IDENTIFICATION BY MASS SPECTROMETRY [LARGE SCALE ANALYSIS]</scope>
</reference>
<dbReference type="EMBL" id="X62952">
    <property type="protein sequence ID" value="CAA44722.1"/>
    <property type="molecule type" value="mRNA"/>
</dbReference>
<dbReference type="EMBL" id="BC061847">
    <property type="protein sequence ID" value="AAH61847.1"/>
    <property type="molecule type" value="mRNA"/>
</dbReference>
<dbReference type="EMBL" id="M84481">
    <property type="protein sequence ID" value="AAA42339.1"/>
    <property type="molecule type" value="mRNA"/>
</dbReference>
<dbReference type="PIR" id="S22119">
    <property type="entry name" value="S22119"/>
</dbReference>
<dbReference type="RefSeq" id="NP_112402.1">
    <property type="nucleotide sequence ID" value="NM_031140.1"/>
</dbReference>
<dbReference type="SMR" id="P31000"/>
<dbReference type="BioGRID" id="249676">
    <property type="interactions" value="12"/>
</dbReference>
<dbReference type="CORUM" id="P31000"/>
<dbReference type="DIP" id="DIP-31882N"/>
<dbReference type="FunCoup" id="P31000">
    <property type="interactions" value="1303"/>
</dbReference>
<dbReference type="IntAct" id="P31000">
    <property type="interactions" value="15"/>
</dbReference>
<dbReference type="MINT" id="P31000"/>
<dbReference type="STRING" id="10116.ENSRNOP00000024430"/>
<dbReference type="CarbonylDB" id="P31000"/>
<dbReference type="GlyCosmos" id="P31000">
    <property type="glycosylation" value="3 sites, No reported glycans"/>
</dbReference>
<dbReference type="GlyGen" id="P31000">
    <property type="glycosylation" value="4 sites, 1 O-linked glycan (1 site)"/>
</dbReference>
<dbReference type="iPTMnet" id="P31000"/>
<dbReference type="PhosphoSitePlus" id="P31000"/>
<dbReference type="SwissPalm" id="P31000"/>
<dbReference type="jPOST" id="P31000"/>
<dbReference type="PaxDb" id="10116-ENSRNOP00000024430"/>
<dbReference type="GeneID" id="81818"/>
<dbReference type="KEGG" id="rno:81818"/>
<dbReference type="UCSC" id="RGD:621646">
    <property type="organism name" value="rat"/>
</dbReference>
<dbReference type="AGR" id="RGD:621646"/>
<dbReference type="CTD" id="7431"/>
<dbReference type="RGD" id="621646">
    <property type="gene designation" value="Vim"/>
</dbReference>
<dbReference type="eggNOG" id="KOG0977">
    <property type="taxonomic scope" value="Eukaryota"/>
</dbReference>
<dbReference type="InParanoid" id="P31000"/>
<dbReference type="OrthoDB" id="2441647at2759"/>
<dbReference type="PhylomeDB" id="P31000"/>
<dbReference type="Reactome" id="R-RNO-264870">
    <property type="pathway name" value="Caspase-mediated cleavage of cytoskeletal proteins"/>
</dbReference>
<dbReference type="Reactome" id="R-RNO-390522">
    <property type="pathway name" value="Striated Muscle Contraction"/>
</dbReference>
<dbReference type="Reactome" id="R-RNO-9013422">
    <property type="pathway name" value="RHOBTB1 GTPase cycle"/>
</dbReference>
<dbReference type="Reactome" id="R-RNO-9646399">
    <property type="pathway name" value="Aggrephagy"/>
</dbReference>
<dbReference type="CD-CODE" id="246D7041">
    <property type="entry name" value="Chromatoid body"/>
</dbReference>
<dbReference type="PRO" id="PR:P31000"/>
<dbReference type="Proteomes" id="UP000002494">
    <property type="component" value="Unplaced"/>
</dbReference>
<dbReference type="GO" id="GO:0030424">
    <property type="term" value="C:axon"/>
    <property type="evidence" value="ECO:0000314"/>
    <property type="project" value="RGD"/>
</dbReference>
<dbReference type="GO" id="GO:0044297">
    <property type="term" value="C:cell body"/>
    <property type="evidence" value="ECO:0000314"/>
    <property type="project" value="RGD"/>
</dbReference>
<dbReference type="GO" id="GO:0031252">
    <property type="term" value="C:cell leading edge"/>
    <property type="evidence" value="ECO:0000266"/>
    <property type="project" value="RGD"/>
</dbReference>
<dbReference type="GO" id="GO:0042995">
    <property type="term" value="C:cell projection"/>
    <property type="evidence" value="ECO:0000314"/>
    <property type="project" value="RGD"/>
</dbReference>
<dbReference type="GO" id="GO:0005737">
    <property type="term" value="C:cytoplasm"/>
    <property type="evidence" value="ECO:0000250"/>
    <property type="project" value="UniProtKB"/>
</dbReference>
<dbReference type="GO" id="GO:0005856">
    <property type="term" value="C:cytoskeleton"/>
    <property type="evidence" value="ECO:0000266"/>
    <property type="project" value="RGD"/>
</dbReference>
<dbReference type="GO" id="GO:0005829">
    <property type="term" value="C:cytosol"/>
    <property type="evidence" value="ECO:0000266"/>
    <property type="project" value="RGD"/>
</dbReference>
<dbReference type="GO" id="GO:0005882">
    <property type="term" value="C:intermediate filament"/>
    <property type="evidence" value="ECO:0000250"/>
    <property type="project" value="UniProtKB"/>
</dbReference>
<dbReference type="GO" id="GO:0043005">
    <property type="term" value="C:neuron projection"/>
    <property type="evidence" value="ECO:0000266"/>
    <property type="project" value="RGD"/>
</dbReference>
<dbReference type="GO" id="GO:0016363">
    <property type="term" value="C:nuclear matrix"/>
    <property type="evidence" value="ECO:0007669"/>
    <property type="project" value="UniProtKB-SubCell"/>
</dbReference>
<dbReference type="GO" id="GO:0048471">
    <property type="term" value="C:perinuclear region of cytoplasm"/>
    <property type="evidence" value="ECO:0000314"/>
    <property type="project" value="RGD"/>
</dbReference>
<dbReference type="GO" id="GO:0005777">
    <property type="term" value="C:peroxisome"/>
    <property type="evidence" value="ECO:0000266"/>
    <property type="project" value="RGD"/>
</dbReference>
<dbReference type="GO" id="GO:0045335">
    <property type="term" value="C:phagocytic vesicle"/>
    <property type="evidence" value="ECO:0000266"/>
    <property type="project" value="RGD"/>
</dbReference>
<dbReference type="GO" id="GO:0005886">
    <property type="term" value="C:plasma membrane"/>
    <property type="evidence" value="ECO:0000250"/>
    <property type="project" value="UniProtKB"/>
</dbReference>
<dbReference type="GO" id="GO:0045098">
    <property type="term" value="C:type III intermediate filament"/>
    <property type="evidence" value="ECO:0000304"/>
    <property type="project" value="RGD"/>
</dbReference>
<dbReference type="GO" id="GO:0003725">
    <property type="term" value="F:double-stranded RNA binding"/>
    <property type="evidence" value="ECO:0000266"/>
    <property type="project" value="RGD"/>
</dbReference>
<dbReference type="GO" id="GO:0042802">
    <property type="term" value="F:identical protein binding"/>
    <property type="evidence" value="ECO:0000266"/>
    <property type="project" value="RGD"/>
</dbReference>
<dbReference type="GO" id="GO:1990254">
    <property type="term" value="F:keratin filament binding"/>
    <property type="evidence" value="ECO:0000266"/>
    <property type="project" value="RGD"/>
</dbReference>
<dbReference type="GO" id="GO:0019900">
    <property type="term" value="F:kinase binding"/>
    <property type="evidence" value="ECO:0000353"/>
    <property type="project" value="RGD"/>
</dbReference>
<dbReference type="GO" id="GO:0060090">
    <property type="term" value="F:molecular adaptor activity"/>
    <property type="evidence" value="ECO:0000266"/>
    <property type="project" value="RGD"/>
</dbReference>
<dbReference type="GO" id="GO:0019904">
    <property type="term" value="F:protein domain specific binding"/>
    <property type="evidence" value="ECO:0000266"/>
    <property type="project" value="RGD"/>
</dbReference>
<dbReference type="GO" id="GO:0051721">
    <property type="term" value="F:protein phosphatase 2A binding"/>
    <property type="evidence" value="ECO:0000314"/>
    <property type="project" value="RGD"/>
</dbReference>
<dbReference type="GO" id="GO:1990782">
    <property type="term" value="F:protein tyrosine kinase binding"/>
    <property type="evidence" value="ECO:0000353"/>
    <property type="project" value="RGD"/>
</dbReference>
<dbReference type="GO" id="GO:0003723">
    <property type="term" value="F:RNA binding"/>
    <property type="evidence" value="ECO:0000266"/>
    <property type="project" value="RGD"/>
</dbReference>
<dbReference type="GO" id="GO:0097110">
    <property type="term" value="F:scaffold protein binding"/>
    <property type="evidence" value="ECO:0000266"/>
    <property type="project" value="RGD"/>
</dbReference>
<dbReference type="GO" id="GO:0005200">
    <property type="term" value="F:structural constituent of cytoskeleton"/>
    <property type="evidence" value="ECO:0000250"/>
    <property type="project" value="UniProtKB"/>
</dbReference>
<dbReference type="GO" id="GO:0005212">
    <property type="term" value="F:structural constituent of eye lens"/>
    <property type="evidence" value="ECO:0000266"/>
    <property type="project" value="RGD"/>
</dbReference>
<dbReference type="GO" id="GO:0005198">
    <property type="term" value="F:structural molecule activity"/>
    <property type="evidence" value="ECO:0000304"/>
    <property type="project" value="RGD"/>
</dbReference>
<dbReference type="GO" id="GO:0014002">
    <property type="term" value="P:astrocyte development"/>
    <property type="evidence" value="ECO:0000266"/>
    <property type="project" value="RGD"/>
</dbReference>
<dbReference type="GO" id="GO:0060020">
    <property type="term" value="P:Bergmann glial cell differentiation"/>
    <property type="evidence" value="ECO:0000266"/>
    <property type="project" value="RGD"/>
</dbReference>
<dbReference type="GO" id="GO:0044344">
    <property type="term" value="P:cellular response to fibroblast growth factor stimulus"/>
    <property type="evidence" value="ECO:0000270"/>
    <property type="project" value="RGD"/>
</dbReference>
<dbReference type="GO" id="GO:0071222">
    <property type="term" value="P:cellular response to lipopolysaccharide"/>
    <property type="evidence" value="ECO:0000250"/>
    <property type="project" value="UniProtKB"/>
</dbReference>
<dbReference type="GO" id="GO:0071225">
    <property type="term" value="P:cellular response to muramyl dipeptide"/>
    <property type="evidence" value="ECO:0000250"/>
    <property type="project" value="UniProtKB"/>
</dbReference>
<dbReference type="GO" id="GO:0071346">
    <property type="term" value="P:cellular response to type II interferon"/>
    <property type="evidence" value="ECO:0000266"/>
    <property type="project" value="RGD"/>
</dbReference>
<dbReference type="GO" id="GO:0046697">
    <property type="term" value="P:decidualization"/>
    <property type="evidence" value="ECO:0000270"/>
    <property type="project" value="RGD"/>
</dbReference>
<dbReference type="GO" id="GO:0045444">
    <property type="term" value="P:fat cell differentiation"/>
    <property type="evidence" value="ECO:0000270"/>
    <property type="project" value="RGD"/>
</dbReference>
<dbReference type="GO" id="GO:0045109">
    <property type="term" value="P:intermediate filament organization"/>
    <property type="evidence" value="ECO:0000250"/>
    <property type="project" value="UniProtKB"/>
</dbReference>
<dbReference type="GO" id="GO:0045103">
    <property type="term" value="P:intermediate filament-based process"/>
    <property type="evidence" value="ECO:0000266"/>
    <property type="project" value="RGD"/>
</dbReference>
<dbReference type="GO" id="GO:0070307">
    <property type="term" value="P:lens fiber cell development"/>
    <property type="evidence" value="ECO:0000266"/>
    <property type="project" value="RGD"/>
</dbReference>
<dbReference type="GO" id="GO:0010977">
    <property type="term" value="P:negative regulation of neuron projection development"/>
    <property type="evidence" value="ECO:0000266"/>
    <property type="project" value="RGD"/>
</dbReference>
<dbReference type="GO" id="GO:0031175">
    <property type="term" value="P:neuron projection development"/>
    <property type="evidence" value="ECO:0000266"/>
    <property type="project" value="RGD"/>
</dbReference>
<dbReference type="GO" id="GO:0032967">
    <property type="term" value="P:positive regulation of collagen biosynthetic process"/>
    <property type="evidence" value="ECO:0000266"/>
    <property type="project" value="RGD"/>
</dbReference>
<dbReference type="GO" id="GO:0010634">
    <property type="term" value="P:positive regulation of epithelial cell migration"/>
    <property type="evidence" value="ECO:0000250"/>
    <property type="project" value="UniProtKB"/>
</dbReference>
<dbReference type="GO" id="GO:0010628">
    <property type="term" value="P:positive regulation of gene expression"/>
    <property type="evidence" value="ECO:0000266"/>
    <property type="project" value="RGD"/>
</dbReference>
<dbReference type="GO" id="GO:0060252">
    <property type="term" value="P:positive regulation of glial cell proliferation"/>
    <property type="evidence" value="ECO:0000315"/>
    <property type="project" value="RGD"/>
</dbReference>
<dbReference type="GO" id="GO:0050770">
    <property type="term" value="P:regulation of axonogenesis"/>
    <property type="evidence" value="ECO:0000314"/>
    <property type="project" value="RGD"/>
</dbReference>
<dbReference type="GO" id="GO:0043488">
    <property type="term" value="P:regulation of mRNA stability"/>
    <property type="evidence" value="ECO:0000266"/>
    <property type="project" value="RGD"/>
</dbReference>
<dbReference type="GO" id="GO:1900147">
    <property type="term" value="P:regulation of Schwann cell migration"/>
    <property type="evidence" value="ECO:0000314"/>
    <property type="project" value="RGD"/>
</dbReference>
<dbReference type="GO" id="GO:0032355">
    <property type="term" value="P:response to estradiol"/>
    <property type="evidence" value="ECO:0000270"/>
    <property type="project" value="RGD"/>
</dbReference>
<dbReference type="GO" id="GO:0010269">
    <property type="term" value="P:response to selenium ion"/>
    <property type="evidence" value="ECO:0000270"/>
    <property type="project" value="RGD"/>
</dbReference>
<dbReference type="GO" id="GO:0033280">
    <property type="term" value="P:response to vitamin D"/>
    <property type="evidence" value="ECO:0000270"/>
    <property type="project" value="RGD"/>
</dbReference>
<dbReference type="GO" id="GO:0010043">
    <property type="term" value="P:response to zinc ion"/>
    <property type="evidence" value="ECO:0000270"/>
    <property type="project" value="RGD"/>
</dbReference>
<dbReference type="GO" id="GO:0043403">
    <property type="term" value="P:skeletal muscle tissue regeneration"/>
    <property type="evidence" value="ECO:0000270"/>
    <property type="project" value="RGD"/>
</dbReference>
<dbReference type="FunFam" id="1.20.5.1160:FF:000001">
    <property type="entry name" value="Keratin type II"/>
    <property type="match status" value="1"/>
</dbReference>
<dbReference type="FunFam" id="1.20.5.170:FF:000002">
    <property type="entry name" value="Type I keratin KA11"/>
    <property type="match status" value="1"/>
</dbReference>
<dbReference type="FunFam" id="1.20.5.500:FF:000001">
    <property type="entry name" value="Type II keratin 23"/>
    <property type="match status" value="1"/>
</dbReference>
<dbReference type="Gene3D" id="1.20.5.170">
    <property type="match status" value="1"/>
</dbReference>
<dbReference type="Gene3D" id="1.20.5.500">
    <property type="entry name" value="Single helix bin"/>
    <property type="match status" value="1"/>
</dbReference>
<dbReference type="Gene3D" id="1.20.5.1160">
    <property type="entry name" value="Vasodilator-stimulated phosphoprotein"/>
    <property type="match status" value="1"/>
</dbReference>
<dbReference type="InterPro" id="IPR018039">
    <property type="entry name" value="IF_conserved"/>
</dbReference>
<dbReference type="InterPro" id="IPR039008">
    <property type="entry name" value="IF_rod_dom"/>
</dbReference>
<dbReference type="InterPro" id="IPR006821">
    <property type="entry name" value="Intermed_filament_DNA-bd"/>
</dbReference>
<dbReference type="InterPro" id="IPR050405">
    <property type="entry name" value="Intermediate_filament"/>
</dbReference>
<dbReference type="PANTHER" id="PTHR45652">
    <property type="entry name" value="GLIAL FIBRILLARY ACIDIC PROTEIN"/>
    <property type="match status" value="1"/>
</dbReference>
<dbReference type="PANTHER" id="PTHR45652:SF5">
    <property type="entry name" value="VIMENTIN"/>
    <property type="match status" value="1"/>
</dbReference>
<dbReference type="Pfam" id="PF00038">
    <property type="entry name" value="Filament"/>
    <property type="match status" value="1"/>
</dbReference>
<dbReference type="Pfam" id="PF04732">
    <property type="entry name" value="Filament_head"/>
    <property type="match status" value="1"/>
</dbReference>
<dbReference type="SMART" id="SM01391">
    <property type="entry name" value="Filament"/>
    <property type="match status" value="1"/>
</dbReference>
<dbReference type="SUPFAM" id="SSF64593">
    <property type="entry name" value="Intermediate filament protein, coiled coil region"/>
    <property type="match status" value="2"/>
</dbReference>
<dbReference type="PROSITE" id="PS00226">
    <property type="entry name" value="IF_ROD_1"/>
    <property type="match status" value="1"/>
</dbReference>
<dbReference type="PROSITE" id="PS51842">
    <property type="entry name" value="IF_ROD_2"/>
    <property type="match status" value="1"/>
</dbReference>
<comment type="function">
    <text evidence="2 10">Vimentins are class-III intermediate filaments found in various non-epithelial cells, especially mesenchymal cells. Vimentin is attached to the nucleus, endoplasmic reticulum, and mitochondria, either laterally or terminally. Plays a role in cell directional movement, orientation, cell sheet organization and Golgi complex polarization at the cell migration front (By similarity). Protects SCRIB from proteasomal degradation and facilitates its localization to intermediate filaments in a cell contact-mediated manner (By similarity).</text>
</comment>
<comment type="function">
    <text evidence="3">Involved with LARP6 in the stabilization of type I collagen mRNAs for CO1A1 and CO1A2.</text>
</comment>
<comment type="subunit">
    <text evidence="3 4 7">Homomer assembled from elementary dimers (By similarity). Identified in complexes that contain VIM, EZR, AHNAK, BFSP1, BFSP2, ANK2, PLEC, PRX and spectrin (By similarity). Interacts with BCAS3 (By similarity). Interacts with LGSN (By similarity). Interacts with SYNM (By similarity). Interacts (via rod region) with PLEC (via CH 1 domain) (By similarity). Interacts with STK33 (By similarity). Interacts with LARP6 (By similarity). Interacts with RAB8B (PubMed:12639940). Interacts with TOR1A; the interaction associates TOR1A with the cytoskeleton. Interacts with TOR1AIP1 (By similarity). Interacts with TOR1AIP1 (By similarity). Interacts with DIAPH1 (By similarity). Interacts with EPPK1; interaction is dependent of higher-order structure of intermediate filament (By similarity). Interacts with the non-receptor tyrosine kinase SRMS; the interaction leads to phosphorylation of VIM (By similarity). Interacts with NOD2 (By similarity). Interacts (via head region) with CORO1C (By similarity). Interacts with HDGF (By similarity). Interacts with PRKCE (via phorbol-ester/DAG-type 2 domain) (By similarity). Interacts with BFSP2 (By similarity). Interacts with PPL (By similarity). Interacts with PKP1 and PKP2 (By similarity). Interacts with SCRIB (via PDZ domains); the interaction protects SCRIB from proteasomal degradation and facilitates SCRIB localization to intermediate filaments, the interaction is reduced by cell contact inhibition (By similarity).</text>
</comment>
<comment type="subcellular location">
    <subcellularLocation>
        <location evidence="3">Cytoplasm</location>
    </subcellularLocation>
    <subcellularLocation>
        <location evidence="3">Cytoplasm</location>
        <location evidence="3">Cytoskeleton</location>
    </subcellularLocation>
    <subcellularLocation>
        <location evidence="9">Nucleus matrix</location>
    </subcellularLocation>
    <subcellularLocation>
        <location evidence="4">Cell membrane</location>
    </subcellularLocation>
</comment>
<comment type="domain">
    <text evidence="3">The central alpha-helical coiled-coil IF rod domain mediates elementary homodimerization.</text>
</comment>
<comment type="domain">
    <text evidence="3">The [IL]-x-C-x-x-[DE] motif is a proposed target motif for cysteine S-nitrosylation mediated by the iNOS-S100A8/A9 transnitrosylase complex.</text>
</comment>
<comment type="PTM">
    <text evidence="3 8">One of the most prominent phosphoproteins in various cells of mesenchymal origin (By similarity). Phosphorylation is enhanced during cell division, at which time vimentin filaments are significantly reorganized (By similarity). Phosphorylation by PKN1 inhibits the formation of filaments (By similarity). Filament disassembly during mitosis is promoted by phosphorylation at Ser-55 as well as by nestin (PubMed:12686602). Phosphorylated at Ser-56 by CDK5 during neutrophil secretion in the cytoplasm (By similarity). Phosphorylated by STK33 (By similarity). Phosphorylated on tyrosine residues by SRMS (By similarity).</text>
</comment>
<comment type="PTM">
    <text evidence="3">S-nitrosylation is induced by interferon-gamma and oxidatively-modified low-densitity lipoprotein (LDL(ox)) possibly implicating the iNOS-S100A8/9 transnitrosylase complex.</text>
</comment>
<comment type="similarity">
    <text evidence="5">Belongs to the intermediate filament family.</text>
</comment>
<name>VIME_RAT</name>
<proteinExistence type="evidence at protein level"/>
<gene>
    <name evidence="11" type="primary">Vim</name>
</gene>
<evidence type="ECO:0000250" key="1"/>
<evidence type="ECO:0000250" key="2">
    <source>
        <dbReference type="UniProtKB" id="A0A8C0N8E3"/>
    </source>
</evidence>
<evidence type="ECO:0000250" key="3">
    <source>
        <dbReference type="UniProtKB" id="P08670"/>
    </source>
</evidence>
<evidence type="ECO:0000250" key="4">
    <source>
        <dbReference type="UniProtKB" id="P20152"/>
    </source>
</evidence>
<evidence type="ECO:0000255" key="5">
    <source>
        <dbReference type="PROSITE-ProRule" id="PRU01188"/>
    </source>
</evidence>
<evidence type="ECO:0000256" key="6">
    <source>
        <dbReference type="SAM" id="MobiDB-lite"/>
    </source>
</evidence>
<evidence type="ECO:0000269" key="7">
    <source>
    </source>
</evidence>
<evidence type="ECO:0000269" key="8">
    <source>
    </source>
</evidence>
<evidence type="ECO:0000269" key="9">
    <source>
    </source>
</evidence>
<evidence type="ECO:0000269" key="10">
    <source>
    </source>
</evidence>
<evidence type="ECO:0000312" key="11">
    <source>
        <dbReference type="RGD" id="621646"/>
    </source>
</evidence>
<evidence type="ECO:0007744" key="12">
    <source>
    </source>
</evidence>
<accession>P31000</accession>
<feature type="initiator methionine" description="Removed" evidence="3">
    <location>
        <position position="1"/>
    </location>
</feature>
<feature type="chain" id="PRO_0000063759" description="Vimentin">
    <location>
        <begin position="2"/>
        <end position="466"/>
    </location>
</feature>
<feature type="domain" description="IF rod" evidence="5">
    <location>
        <begin position="103"/>
        <end position="411"/>
    </location>
</feature>
<feature type="region of interest" description="Disordered" evidence="6">
    <location>
        <begin position="1"/>
        <end position="33"/>
    </location>
</feature>
<feature type="region of interest" description="Head">
    <location>
        <begin position="2"/>
        <end position="95"/>
    </location>
</feature>
<feature type="region of interest" description="Coil 1A">
    <location>
        <begin position="96"/>
        <end position="131"/>
    </location>
</feature>
<feature type="region of interest" description="Linker 1">
    <location>
        <begin position="132"/>
        <end position="153"/>
    </location>
</feature>
<feature type="region of interest" description="Coil 1B">
    <location>
        <begin position="154"/>
        <end position="245"/>
    </location>
</feature>
<feature type="region of interest" description="Linker 12">
    <location>
        <begin position="246"/>
        <end position="268"/>
    </location>
</feature>
<feature type="region of interest" description="Coil 2">
    <location>
        <begin position="269"/>
        <end position="407"/>
    </location>
</feature>
<feature type="region of interest" description="Tail">
    <location>
        <begin position="408"/>
        <end position="466"/>
    </location>
</feature>
<feature type="coiled-coil region">
    <location>
        <begin position="96"/>
        <end position="131"/>
    </location>
</feature>
<feature type="coiled-coil region">
    <location>
        <begin position="154"/>
        <end position="245"/>
    </location>
</feature>
<feature type="coiled-coil region">
    <location>
        <begin position="303"/>
        <end position="407"/>
    </location>
</feature>
<feature type="short sequence motif" description="[IL]-x-C-x-x-[DE] motif" evidence="3">
    <location>
        <begin position="326"/>
        <end position="329"/>
    </location>
</feature>
<feature type="compositionally biased region" description="Low complexity" evidence="6">
    <location>
        <begin position="1"/>
        <end position="13"/>
    </location>
</feature>
<feature type="compositionally biased region" description="Low complexity" evidence="6">
    <location>
        <begin position="20"/>
        <end position="33"/>
    </location>
</feature>
<feature type="site" description="Stutter" evidence="1">
    <location>
        <position position="351"/>
    </location>
</feature>
<feature type="modified residue" description="N-acetylserine" evidence="3">
    <location>
        <position position="2"/>
    </location>
</feature>
<feature type="modified residue" description="Phosphoserine" evidence="3">
    <location>
        <position position="5"/>
    </location>
</feature>
<feature type="modified residue" description="Phosphoserine; by PKA and PKC; alternate" evidence="3">
    <location>
        <position position="7"/>
    </location>
</feature>
<feature type="modified residue" description="Phosphoserine" evidence="3">
    <location>
        <position position="8"/>
    </location>
</feature>
<feature type="modified residue" description="Phosphoserine; by PKC" evidence="3">
    <location>
        <position position="9"/>
    </location>
</feature>
<feature type="modified residue" description="Phosphoserine; by PKC" evidence="3">
    <location>
        <position position="10"/>
    </location>
</feature>
<feature type="modified residue" description="Phosphothreonine" evidence="3">
    <location>
        <position position="20"/>
    </location>
</feature>
<feature type="modified residue" description="Phosphoserine" evidence="4">
    <location>
        <position position="25"/>
    </location>
</feature>
<feature type="modified residue" description="Phosphoserine" evidence="4">
    <location>
        <position position="26"/>
    </location>
</feature>
<feature type="modified residue" description="Phosphoserine; by PKC; alternate" evidence="3">
    <location>
        <position position="34"/>
    </location>
</feature>
<feature type="modified residue" description="Phosphoserine; by CaMK2, PKA, PKC and ROCK2" evidence="3">
    <location>
        <position position="39"/>
    </location>
</feature>
<feature type="modified residue" description="Phosphoserine; by PKC" evidence="3">
    <location>
        <position position="42"/>
    </location>
</feature>
<feature type="modified residue" description="Phosphoserine; by PKA" evidence="4">
    <location>
        <position position="47"/>
    </location>
</feature>
<feature type="modified residue" description="Phosphoserine" evidence="3">
    <location>
        <position position="49"/>
    </location>
</feature>
<feature type="modified residue" description="Phosphoserine" evidence="12">
    <location>
        <position position="51"/>
    </location>
</feature>
<feature type="modified residue" description="Phosphotyrosine" evidence="4">
    <location>
        <position position="53"/>
    </location>
</feature>
<feature type="modified residue" description="Phosphoserine" evidence="8">
    <location>
        <position position="55"/>
    </location>
</feature>
<feature type="modified residue" description="Phosphoserine" evidence="12">
    <location>
        <position position="56"/>
    </location>
</feature>
<feature type="modified residue" description="Phosphotyrosine" evidence="3">
    <location>
        <position position="61"/>
    </location>
</feature>
<feature type="modified residue" description="Phosphoserine; by PKA and PKC" evidence="4">
    <location>
        <position position="66"/>
    </location>
</feature>
<feature type="modified residue" description="Phosphoserine; by AURKB and ROCK2" evidence="3">
    <location>
        <position position="72"/>
    </location>
</feature>
<feature type="modified residue" description="Phosphoserine" evidence="3">
    <location>
        <position position="73"/>
    </location>
</feature>
<feature type="modified residue" description="Phosphoserine" evidence="12">
    <location>
        <position position="83"/>
    </location>
</feature>
<feature type="modified residue" description="Phosphoserine" evidence="3">
    <location>
        <position position="87"/>
    </location>
</feature>
<feature type="modified residue" description="Phosphotyrosine" evidence="3">
    <location>
        <position position="117"/>
    </location>
</feature>
<feature type="modified residue" description="N6-acetyllysine; alternate" evidence="3">
    <location>
        <position position="120"/>
    </location>
</feature>
<feature type="modified residue" description="N6-succinyllysine; alternate" evidence="4">
    <location>
        <position position="120"/>
    </location>
</feature>
<feature type="modified residue" description="N6-acetyllysine; alternate" evidence="4">
    <location>
        <position position="129"/>
    </location>
</feature>
<feature type="modified residue" description="N6-succinyllysine; alternate" evidence="4">
    <location>
        <position position="129"/>
    </location>
</feature>
<feature type="modified residue" description="N6-acetyllysine; alternate" evidence="3">
    <location>
        <position position="139"/>
    </location>
</feature>
<feature type="modified residue" description="Phosphoserine" evidence="12">
    <location>
        <position position="144"/>
    </location>
</feature>
<feature type="modified residue" description="N6-acetyllysine" evidence="4">
    <location>
        <position position="168"/>
    </location>
</feature>
<feature type="modified residue" description="N6-acetyllysine; alternate" evidence="4">
    <location>
        <position position="188"/>
    </location>
</feature>
<feature type="modified residue" description="N6-succinyllysine; alternate" evidence="4">
    <location>
        <position position="188"/>
    </location>
</feature>
<feature type="modified residue" description="Phosphoserine" evidence="12">
    <location>
        <position position="214"/>
    </location>
</feature>
<feature type="modified residue" description="N6-acetyllysine; alternate" evidence="4">
    <location>
        <position position="223"/>
    </location>
</feature>
<feature type="modified residue" description="Phosphoserine" evidence="3">
    <location>
        <position position="226"/>
    </location>
</feature>
<feature type="modified residue" description="N6-acetyllysine" evidence="4">
    <location>
        <position position="235"/>
    </location>
</feature>
<feature type="modified residue" description="N6-acetyllysine; alternate" evidence="4">
    <location>
        <position position="294"/>
    </location>
</feature>
<feature type="modified residue" description="N6-succinyllysine; alternate" evidence="4">
    <location>
        <position position="294"/>
    </location>
</feature>
<feature type="modified residue" description="Phosphoserine" evidence="3">
    <location>
        <position position="299"/>
    </location>
</feature>
<feature type="modified residue" description="Phosphoserine" evidence="4">
    <location>
        <position position="325"/>
    </location>
</feature>
<feature type="modified residue" description="N6-acetyllysine; alternate" evidence="3">
    <location>
        <position position="373"/>
    </location>
</feature>
<feature type="modified residue" description="Phosphoserine" evidence="3">
    <location>
        <position position="409"/>
    </location>
</feature>
<feature type="modified residue" description="Phosphoserine" evidence="12">
    <location>
        <position position="412"/>
    </location>
</feature>
<feature type="modified residue" description="Phosphoserine" evidence="12">
    <location>
        <position position="419"/>
    </location>
</feature>
<feature type="modified residue" description="Phosphoserine" evidence="12">
    <location>
        <position position="420"/>
    </location>
</feature>
<feature type="modified residue" description="Phosphothreonine" evidence="3">
    <location>
        <position position="426"/>
    </location>
</feature>
<feature type="modified residue" description="Phosphoserine" evidence="12">
    <location>
        <position position="430"/>
    </location>
</feature>
<feature type="modified residue" description="Phosphothreonine" evidence="3">
    <location>
        <position position="436"/>
    </location>
</feature>
<feature type="modified residue" description="Phosphoserine" evidence="3">
    <location>
        <position position="438"/>
    </location>
</feature>
<feature type="modified residue" description="N6-acetyllysine; alternate" evidence="3">
    <location>
        <position position="445"/>
    </location>
</feature>
<feature type="modified residue" description="N6-succinyllysine; alternate" evidence="4">
    <location>
        <position position="445"/>
    </location>
</feature>
<feature type="modified residue" description="Phosphothreonine" evidence="3">
    <location>
        <position position="446"/>
    </location>
</feature>
<feature type="modified residue" description="Phosphothreonine" evidence="3">
    <location>
        <position position="458"/>
    </location>
</feature>
<feature type="modified residue" description="Phosphoserine" evidence="12">
    <location>
        <position position="459"/>
    </location>
</feature>
<feature type="glycosylation site" description="O-linked (GlcNAc) serine; alternate" evidence="1">
    <location>
        <position position="7"/>
    </location>
</feature>
<feature type="glycosylation site" description="O-linked (GlcNAc) threonine" evidence="1">
    <location>
        <position position="33"/>
    </location>
</feature>
<feature type="glycosylation site" description="O-linked (GlcNAc) serine; alternate" evidence="1">
    <location>
        <position position="34"/>
    </location>
</feature>
<feature type="cross-link" description="Glycyl lysine isopeptide (Lys-Gly) (interchain with G-Cter in SUMO2)" evidence="3">
    <location>
        <position position="104"/>
    </location>
</feature>
<feature type="cross-link" description="Glycyl lysine isopeptide (Lys-Gly) (interchain with G-Cter in SUMO2); alternate" evidence="3">
    <location>
        <position position="120"/>
    </location>
</feature>
<feature type="cross-link" description="Glycyl lysine isopeptide (Lys-Gly) (interchain with G-Cter in SUMO2); alternate" evidence="3">
    <location>
        <position position="129"/>
    </location>
</feature>
<feature type="cross-link" description="Glycyl lysine isopeptide (Lys-Gly) (interchain with G-Cter in SUMO2); alternate" evidence="3">
    <location>
        <position position="139"/>
    </location>
</feature>
<feature type="cross-link" description="Glycyl lysine isopeptide (Lys-Gly) (interchain with G-Cter in SUMO2); alternate" evidence="3">
    <location>
        <position position="223"/>
    </location>
</feature>
<feature type="cross-link" description="Glycyl lysine isopeptide (Lys-Gly) (interchain with G-Cter in SUMO2)" evidence="3">
    <location>
        <position position="262"/>
    </location>
</feature>
<feature type="cross-link" description="Glycyl lysine isopeptide (Lys-Gly) (interchain with G-Cter in SUMO2); alternate" evidence="3">
    <location>
        <position position="294"/>
    </location>
</feature>
<feature type="cross-link" description="Glycyl lysine isopeptide (Lys-Gly) (interchain with G-Cter in SUMO2)" evidence="3">
    <location>
        <position position="313"/>
    </location>
</feature>
<feature type="cross-link" description="Glycyl lysine isopeptide (Lys-Gly) (interchain with G-Cter in SUMO2); alternate" evidence="3">
    <location>
        <position position="373"/>
    </location>
</feature>
<feature type="cross-link" description="Glycyl lysine isopeptide (Lys-Gly) (interchain with G-Cter in SUMO2)" evidence="3">
    <location>
        <position position="439"/>
    </location>
</feature>
<feature type="cross-link" description="Glycyl lysine isopeptide (Lys-Gly) (interchain with G-Cter in SUMO1); alternate" evidence="3">
    <location>
        <position position="445"/>
    </location>
</feature>
<feature type="cross-link" description="Glycyl lysine isopeptide (Lys-Gly) (interchain with G-Cter in SUMO2); alternate" evidence="3">
    <location>
        <position position="445"/>
    </location>
</feature>
<feature type="mutagenesis site" description="Retains filamentous network during mitosis when transfected alone and when coexpressed with nestin." evidence="8">
    <original>S</original>
    <variation>A</variation>
    <location>
        <position position="55"/>
    </location>
</feature>
<feature type="mutagenesis site" description="Induces loss of filamentous network when coexpressed with nestin." evidence="8">
    <original>TS</original>
    <variation>AA</variation>
    <location>
        <begin position="458"/>
        <end position="459"/>
    </location>
</feature>
<protein>
    <recommendedName>
        <fullName evidence="11">Vimentin</fullName>
    </recommendedName>
</protein>
<organism>
    <name type="scientific">Rattus norvegicus</name>
    <name type="common">Rat</name>
    <dbReference type="NCBI Taxonomy" id="10116"/>
    <lineage>
        <taxon>Eukaryota</taxon>
        <taxon>Metazoa</taxon>
        <taxon>Chordata</taxon>
        <taxon>Craniata</taxon>
        <taxon>Vertebrata</taxon>
        <taxon>Euteleostomi</taxon>
        <taxon>Mammalia</taxon>
        <taxon>Eutheria</taxon>
        <taxon>Euarchontoglires</taxon>
        <taxon>Glires</taxon>
        <taxon>Rodentia</taxon>
        <taxon>Myomorpha</taxon>
        <taxon>Muroidea</taxon>
        <taxon>Muridae</taxon>
        <taxon>Murinae</taxon>
        <taxon>Rattus</taxon>
    </lineage>
</organism>
<sequence>MSTRSVSSSSYRRMFGGSGTSSRPSSNRSYVTTSTRTYSLGSALRPSTSRSLYSSSPGGAYVTRSSAVRLRSSMPGVRLLQDSVDFSLADAINTEFKNTRTNEKVELQELNDRFANYIDKVRFLEQQNKILLAELEQLKGQGKSRLGDLYEEEMRELRRQVDQLTNDKARVEVERDNLAEDIMRLREKLQEEMLQREEAESTLQSFRQDVDNASLARLDLERKVESLQEEIAFLKKLHDEEIQELQAQIQEQHVQIDVDVSKPDLTAALRDVRQQYESVAAKNLQEAEEWYKSKFADLSEAANRNNDALRQAKQESNEYRRQVQSLTCEVDALKGTNESLERQMREMEENFALEAANYQDTIGRLQDEIQNMKEEMARHLREYQDLLNVKMALDIEIATYRKLLEGEESRISLPLPNFSSLNLRETNLESLPLVDTHSKRTLLIKTVETRDGQVINETSQHHDDLE</sequence>